<comment type="function">
    <text evidence="1">Involved in the binding of tRNA to the ribosomes.</text>
</comment>
<comment type="subunit">
    <text evidence="1">Part of the 30S ribosomal subunit.</text>
</comment>
<comment type="similarity">
    <text evidence="1">Belongs to the universal ribosomal protein uS10 family.</text>
</comment>
<reference key="1">
    <citation type="submission" date="2008-06" db="EMBL/GenBank/DDBJ databases">
        <title>Complete sequence of Chlorobium phaeobacteroides BS1.</title>
        <authorList>
            <consortium name="US DOE Joint Genome Institute"/>
            <person name="Lucas S."/>
            <person name="Copeland A."/>
            <person name="Lapidus A."/>
            <person name="Glavina del Rio T."/>
            <person name="Dalin E."/>
            <person name="Tice H."/>
            <person name="Bruce D."/>
            <person name="Goodwin L."/>
            <person name="Pitluck S."/>
            <person name="Schmutz J."/>
            <person name="Larimer F."/>
            <person name="Land M."/>
            <person name="Hauser L."/>
            <person name="Kyrpides N."/>
            <person name="Ovchinnikova G."/>
            <person name="Li T."/>
            <person name="Liu Z."/>
            <person name="Zhao F."/>
            <person name="Overmann J."/>
            <person name="Bryant D.A."/>
            <person name="Richardson P."/>
        </authorList>
    </citation>
    <scope>NUCLEOTIDE SEQUENCE [LARGE SCALE GENOMIC DNA]</scope>
    <source>
        <strain>BS1</strain>
    </source>
</reference>
<keyword id="KW-0687">Ribonucleoprotein</keyword>
<keyword id="KW-0689">Ribosomal protein</keyword>
<dbReference type="EMBL" id="CP001101">
    <property type="protein sequence ID" value="ACE05201.1"/>
    <property type="molecule type" value="Genomic_DNA"/>
</dbReference>
<dbReference type="SMR" id="B3EP62"/>
<dbReference type="STRING" id="331678.Cphamn1_2297"/>
<dbReference type="KEGG" id="cpb:Cphamn1_2297"/>
<dbReference type="eggNOG" id="COG0051">
    <property type="taxonomic scope" value="Bacteria"/>
</dbReference>
<dbReference type="HOGENOM" id="CLU_122625_1_3_10"/>
<dbReference type="OrthoDB" id="9804464at2"/>
<dbReference type="GO" id="GO:1990904">
    <property type="term" value="C:ribonucleoprotein complex"/>
    <property type="evidence" value="ECO:0007669"/>
    <property type="project" value="UniProtKB-KW"/>
</dbReference>
<dbReference type="GO" id="GO:0005840">
    <property type="term" value="C:ribosome"/>
    <property type="evidence" value="ECO:0007669"/>
    <property type="project" value="UniProtKB-KW"/>
</dbReference>
<dbReference type="GO" id="GO:0003735">
    <property type="term" value="F:structural constituent of ribosome"/>
    <property type="evidence" value="ECO:0007669"/>
    <property type="project" value="InterPro"/>
</dbReference>
<dbReference type="GO" id="GO:0000049">
    <property type="term" value="F:tRNA binding"/>
    <property type="evidence" value="ECO:0007669"/>
    <property type="project" value="UniProtKB-UniRule"/>
</dbReference>
<dbReference type="GO" id="GO:0006412">
    <property type="term" value="P:translation"/>
    <property type="evidence" value="ECO:0007669"/>
    <property type="project" value="UniProtKB-UniRule"/>
</dbReference>
<dbReference type="FunFam" id="3.30.70.600:FF:000003">
    <property type="entry name" value="30S ribosomal protein S10"/>
    <property type="match status" value="1"/>
</dbReference>
<dbReference type="Gene3D" id="3.30.70.600">
    <property type="entry name" value="Ribosomal protein S10 domain"/>
    <property type="match status" value="1"/>
</dbReference>
<dbReference type="HAMAP" id="MF_00508">
    <property type="entry name" value="Ribosomal_uS10"/>
    <property type="match status" value="1"/>
</dbReference>
<dbReference type="InterPro" id="IPR001848">
    <property type="entry name" value="Ribosomal_uS10"/>
</dbReference>
<dbReference type="InterPro" id="IPR018268">
    <property type="entry name" value="Ribosomal_uS10_CS"/>
</dbReference>
<dbReference type="InterPro" id="IPR027486">
    <property type="entry name" value="Ribosomal_uS10_dom"/>
</dbReference>
<dbReference type="InterPro" id="IPR036838">
    <property type="entry name" value="Ribosomal_uS10_dom_sf"/>
</dbReference>
<dbReference type="NCBIfam" id="NF001861">
    <property type="entry name" value="PRK00596.1"/>
    <property type="match status" value="1"/>
</dbReference>
<dbReference type="NCBIfam" id="TIGR01049">
    <property type="entry name" value="rpsJ_bact"/>
    <property type="match status" value="1"/>
</dbReference>
<dbReference type="PANTHER" id="PTHR11700">
    <property type="entry name" value="30S RIBOSOMAL PROTEIN S10 FAMILY MEMBER"/>
    <property type="match status" value="1"/>
</dbReference>
<dbReference type="Pfam" id="PF00338">
    <property type="entry name" value="Ribosomal_S10"/>
    <property type="match status" value="1"/>
</dbReference>
<dbReference type="PRINTS" id="PR00971">
    <property type="entry name" value="RIBOSOMALS10"/>
</dbReference>
<dbReference type="SMART" id="SM01403">
    <property type="entry name" value="Ribosomal_S10"/>
    <property type="match status" value="1"/>
</dbReference>
<dbReference type="SUPFAM" id="SSF54999">
    <property type="entry name" value="Ribosomal protein S10"/>
    <property type="match status" value="1"/>
</dbReference>
<dbReference type="PROSITE" id="PS00361">
    <property type="entry name" value="RIBOSOMAL_S10"/>
    <property type="match status" value="1"/>
</dbReference>
<accession>B3EP62</accession>
<evidence type="ECO:0000255" key="1">
    <source>
        <dbReference type="HAMAP-Rule" id="MF_00508"/>
    </source>
</evidence>
<evidence type="ECO:0000305" key="2"/>
<gene>
    <name evidence="1" type="primary">rpsJ</name>
    <name type="ordered locus">Cphamn1_2297</name>
</gene>
<protein>
    <recommendedName>
        <fullName evidence="1">Small ribosomal subunit protein uS10</fullName>
    </recommendedName>
    <alternativeName>
        <fullName evidence="2">30S ribosomal protein S10</fullName>
    </alternativeName>
</protein>
<name>RS10_CHLPB</name>
<proteinExistence type="inferred from homology"/>
<feature type="chain" id="PRO_1000127099" description="Small ribosomal subunit protein uS10">
    <location>
        <begin position="1"/>
        <end position="102"/>
    </location>
</feature>
<sequence>MAVQQKIRIKLKSYDHSLVDKWAVKIIDVVKQTDAIIFGPIPLPTKTHVYTVNRSPHVDKKSREQFSFSSHKRLIEIIPTGRTIDMLMKLELPSGVDVEIKS</sequence>
<organism>
    <name type="scientific">Chlorobium phaeobacteroides (strain BS1)</name>
    <dbReference type="NCBI Taxonomy" id="331678"/>
    <lineage>
        <taxon>Bacteria</taxon>
        <taxon>Pseudomonadati</taxon>
        <taxon>Chlorobiota</taxon>
        <taxon>Chlorobiia</taxon>
        <taxon>Chlorobiales</taxon>
        <taxon>Chlorobiaceae</taxon>
        <taxon>Chlorobium/Pelodictyon group</taxon>
        <taxon>Chlorobium</taxon>
    </lineage>
</organism>